<reference key="1">
    <citation type="journal article" date="2011" name="MBio">
        <title>Novel metabolic attributes of the genus Cyanothece, comprising a group of unicellular nitrogen-fixing Cyanobacteria.</title>
        <authorList>
            <person name="Bandyopadhyay A."/>
            <person name="Elvitigala T."/>
            <person name="Welsh E."/>
            <person name="Stockel J."/>
            <person name="Liberton M."/>
            <person name="Min H."/>
            <person name="Sherman L.A."/>
            <person name="Pakrasi H.B."/>
        </authorList>
    </citation>
    <scope>NUCLEOTIDE SEQUENCE [LARGE SCALE GENOMIC DNA]</scope>
    <source>
        <strain>PCC 8801 / RF-1</strain>
    </source>
</reference>
<keyword id="KW-0963">Cytoplasm</keyword>
<keyword id="KW-0378">Hydrolase</keyword>
<keyword id="KW-1185">Reference proteome</keyword>
<keyword id="KW-0694">RNA-binding</keyword>
<keyword id="KW-0820">tRNA-binding</keyword>
<comment type="function">
    <text evidence="1">An aminoacyl-tRNA editing enzyme that deacylates mischarged D-aminoacyl-tRNAs. Also deacylates mischarged glycyl-tRNA(Ala), protecting cells against glycine mischarging by AlaRS. Acts via tRNA-based rather than protein-based catalysis; rejects L-amino acids rather than detecting D-amino acids in the active site. By recycling D-aminoacyl-tRNA to D-amino acids and free tRNA molecules, this enzyme counteracts the toxicity associated with the formation of D-aminoacyl-tRNA entities in vivo and helps enforce protein L-homochirality.</text>
</comment>
<comment type="catalytic activity">
    <reaction evidence="1">
        <text>glycyl-tRNA(Ala) + H2O = tRNA(Ala) + glycine + H(+)</text>
        <dbReference type="Rhea" id="RHEA:53744"/>
        <dbReference type="Rhea" id="RHEA-COMP:9657"/>
        <dbReference type="Rhea" id="RHEA-COMP:13640"/>
        <dbReference type="ChEBI" id="CHEBI:15377"/>
        <dbReference type="ChEBI" id="CHEBI:15378"/>
        <dbReference type="ChEBI" id="CHEBI:57305"/>
        <dbReference type="ChEBI" id="CHEBI:78442"/>
        <dbReference type="ChEBI" id="CHEBI:78522"/>
        <dbReference type="EC" id="3.1.1.96"/>
    </reaction>
</comment>
<comment type="catalytic activity">
    <reaction evidence="1">
        <text>a D-aminoacyl-tRNA + H2O = a tRNA + a D-alpha-amino acid + H(+)</text>
        <dbReference type="Rhea" id="RHEA:13953"/>
        <dbReference type="Rhea" id="RHEA-COMP:10123"/>
        <dbReference type="Rhea" id="RHEA-COMP:10124"/>
        <dbReference type="ChEBI" id="CHEBI:15377"/>
        <dbReference type="ChEBI" id="CHEBI:15378"/>
        <dbReference type="ChEBI" id="CHEBI:59871"/>
        <dbReference type="ChEBI" id="CHEBI:78442"/>
        <dbReference type="ChEBI" id="CHEBI:79333"/>
        <dbReference type="EC" id="3.1.1.96"/>
    </reaction>
</comment>
<comment type="subunit">
    <text evidence="1">Homodimer.</text>
</comment>
<comment type="subcellular location">
    <subcellularLocation>
        <location evidence="1">Cytoplasm</location>
    </subcellularLocation>
</comment>
<comment type="domain">
    <text evidence="1">A Gly-cisPro motif from one monomer fits into the active site of the other monomer to allow specific chiral rejection of L-amino acids.</text>
</comment>
<comment type="similarity">
    <text evidence="1">Belongs to the DTD family.</text>
</comment>
<proteinExistence type="inferred from homology"/>
<name>DTD_RIPO1</name>
<dbReference type="EC" id="3.1.1.96" evidence="1"/>
<dbReference type="EMBL" id="CP001287">
    <property type="protein sequence ID" value="ACK65298.1"/>
    <property type="molecule type" value="Genomic_DNA"/>
</dbReference>
<dbReference type="RefSeq" id="WP_012594572.1">
    <property type="nucleotide sequence ID" value="NC_011726.1"/>
</dbReference>
<dbReference type="SMR" id="B7K3F6"/>
<dbReference type="STRING" id="41431.PCC8801_1232"/>
<dbReference type="KEGG" id="cyp:PCC8801_1232"/>
<dbReference type="eggNOG" id="COG1490">
    <property type="taxonomic scope" value="Bacteria"/>
</dbReference>
<dbReference type="HOGENOM" id="CLU_076901_1_0_3"/>
<dbReference type="OrthoDB" id="9801395at2"/>
<dbReference type="Proteomes" id="UP000008204">
    <property type="component" value="Chromosome"/>
</dbReference>
<dbReference type="GO" id="GO:0005737">
    <property type="term" value="C:cytoplasm"/>
    <property type="evidence" value="ECO:0007669"/>
    <property type="project" value="UniProtKB-SubCell"/>
</dbReference>
<dbReference type="GO" id="GO:0051500">
    <property type="term" value="F:D-tyrosyl-tRNA(Tyr) deacylase activity"/>
    <property type="evidence" value="ECO:0007669"/>
    <property type="project" value="TreeGrafter"/>
</dbReference>
<dbReference type="GO" id="GO:0106026">
    <property type="term" value="F:Gly-tRNA(Ala) deacylase activity"/>
    <property type="evidence" value="ECO:0007669"/>
    <property type="project" value="UniProtKB-UniRule"/>
</dbReference>
<dbReference type="GO" id="GO:0043908">
    <property type="term" value="F:Ser(Gly)-tRNA(Ala) hydrolase activity"/>
    <property type="evidence" value="ECO:0007669"/>
    <property type="project" value="UniProtKB-UniRule"/>
</dbReference>
<dbReference type="GO" id="GO:0000049">
    <property type="term" value="F:tRNA binding"/>
    <property type="evidence" value="ECO:0007669"/>
    <property type="project" value="UniProtKB-UniRule"/>
</dbReference>
<dbReference type="GO" id="GO:0019478">
    <property type="term" value="P:D-amino acid catabolic process"/>
    <property type="evidence" value="ECO:0007669"/>
    <property type="project" value="UniProtKB-UniRule"/>
</dbReference>
<dbReference type="CDD" id="cd00563">
    <property type="entry name" value="Dtyr_deacylase"/>
    <property type="match status" value="1"/>
</dbReference>
<dbReference type="FunFam" id="3.50.80.10:FF:000001">
    <property type="entry name" value="D-aminoacyl-tRNA deacylase"/>
    <property type="match status" value="1"/>
</dbReference>
<dbReference type="Gene3D" id="3.50.80.10">
    <property type="entry name" value="D-tyrosyl-tRNA(Tyr) deacylase"/>
    <property type="match status" value="1"/>
</dbReference>
<dbReference type="HAMAP" id="MF_00518">
    <property type="entry name" value="Deacylase_Dtd"/>
    <property type="match status" value="1"/>
</dbReference>
<dbReference type="InterPro" id="IPR003732">
    <property type="entry name" value="Daa-tRNA_deacyls_DTD"/>
</dbReference>
<dbReference type="InterPro" id="IPR023509">
    <property type="entry name" value="DTD-like_sf"/>
</dbReference>
<dbReference type="NCBIfam" id="TIGR00256">
    <property type="entry name" value="D-aminoacyl-tRNA deacylase"/>
    <property type="match status" value="1"/>
</dbReference>
<dbReference type="PANTHER" id="PTHR10472:SF5">
    <property type="entry name" value="D-AMINOACYL-TRNA DEACYLASE 1"/>
    <property type="match status" value="1"/>
</dbReference>
<dbReference type="PANTHER" id="PTHR10472">
    <property type="entry name" value="D-TYROSYL-TRNA TYR DEACYLASE"/>
    <property type="match status" value="1"/>
</dbReference>
<dbReference type="Pfam" id="PF02580">
    <property type="entry name" value="Tyr_Deacylase"/>
    <property type="match status" value="1"/>
</dbReference>
<dbReference type="SUPFAM" id="SSF69500">
    <property type="entry name" value="DTD-like"/>
    <property type="match status" value="1"/>
</dbReference>
<accession>B7K3F6</accession>
<evidence type="ECO:0000255" key="1">
    <source>
        <dbReference type="HAMAP-Rule" id="MF_00518"/>
    </source>
</evidence>
<organism>
    <name type="scientific">Rippkaea orientalis (strain PCC 8801 / RF-1)</name>
    <name type="common">Cyanothece sp. (strain PCC 8801)</name>
    <dbReference type="NCBI Taxonomy" id="41431"/>
    <lineage>
        <taxon>Bacteria</taxon>
        <taxon>Bacillati</taxon>
        <taxon>Cyanobacteriota</taxon>
        <taxon>Cyanophyceae</taxon>
        <taxon>Oscillatoriophycideae</taxon>
        <taxon>Chroococcales</taxon>
        <taxon>Aphanothecaceae</taxon>
        <taxon>Rippkaea</taxon>
        <taxon>Rippkaea orientalis</taxon>
    </lineage>
</organism>
<sequence>MRVIIQRVKGSSVRVNGEIVGQISRGLNLLVGIGNNDTESELDWMTRKCLELRLFPAEEGGDRWEKSVQEIQGELLVISQFTLYGDCRKGRRPSFSDSASPSIAKTLYDQFVAQLKDSGLKVETGIFGAMMQVTIDNDGPVTLLLER</sequence>
<feature type="chain" id="PRO_1000127514" description="D-aminoacyl-tRNA deacylase">
    <location>
        <begin position="1"/>
        <end position="147"/>
    </location>
</feature>
<feature type="short sequence motif" description="Gly-cisPro motif, important for rejection of L-amino acids" evidence="1">
    <location>
        <begin position="139"/>
        <end position="140"/>
    </location>
</feature>
<protein>
    <recommendedName>
        <fullName evidence="1">D-aminoacyl-tRNA deacylase</fullName>
        <shortName evidence="1">DTD</shortName>
        <ecNumber evidence="1">3.1.1.96</ecNumber>
    </recommendedName>
    <alternativeName>
        <fullName evidence="1">Gly-tRNA(Ala) deacylase</fullName>
    </alternativeName>
</protein>
<gene>
    <name evidence="1" type="primary">dtd</name>
    <name type="ordered locus">PCC8801_1232</name>
</gene>